<name>RNF32_MOUSE</name>
<proteinExistence type="evidence at protein level"/>
<reference key="1">
    <citation type="journal article" date="2000" name="Genomics">
        <title>A novel candidate gene for mouse and human preaxial polydactyly with altered expression in limbs of hemimelic extra-toes mutant mice.</title>
        <authorList>
            <person name="Clark R.M."/>
            <person name="Marker P.C."/>
            <person name="Kingsley D.M."/>
        </authorList>
    </citation>
    <scope>NUCLEOTIDE SEQUENCE [MRNA]</scope>
    <source>
        <strain>C57BL/10</strain>
    </source>
</reference>
<reference key="2">
    <citation type="journal article" date="2005" name="Science">
        <title>The transcriptional landscape of the mammalian genome.</title>
        <authorList>
            <person name="Carninci P."/>
            <person name="Kasukawa T."/>
            <person name="Katayama S."/>
            <person name="Gough J."/>
            <person name="Frith M.C."/>
            <person name="Maeda N."/>
            <person name="Oyama R."/>
            <person name="Ravasi T."/>
            <person name="Lenhard B."/>
            <person name="Wells C."/>
            <person name="Kodzius R."/>
            <person name="Shimokawa K."/>
            <person name="Bajic V.B."/>
            <person name="Brenner S.E."/>
            <person name="Batalov S."/>
            <person name="Forrest A.R."/>
            <person name="Zavolan M."/>
            <person name="Davis M.J."/>
            <person name="Wilming L.G."/>
            <person name="Aidinis V."/>
            <person name="Allen J.E."/>
            <person name="Ambesi-Impiombato A."/>
            <person name="Apweiler R."/>
            <person name="Aturaliya R.N."/>
            <person name="Bailey T.L."/>
            <person name="Bansal M."/>
            <person name="Baxter L."/>
            <person name="Beisel K.W."/>
            <person name="Bersano T."/>
            <person name="Bono H."/>
            <person name="Chalk A.M."/>
            <person name="Chiu K.P."/>
            <person name="Choudhary V."/>
            <person name="Christoffels A."/>
            <person name="Clutterbuck D.R."/>
            <person name="Crowe M.L."/>
            <person name="Dalla E."/>
            <person name="Dalrymple B.P."/>
            <person name="de Bono B."/>
            <person name="Della Gatta G."/>
            <person name="di Bernardo D."/>
            <person name="Down T."/>
            <person name="Engstrom P."/>
            <person name="Fagiolini M."/>
            <person name="Faulkner G."/>
            <person name="Fletcher C.F."/>
            <person name="Fukushima T."/>
            <person name="Furuno M."/>
            <person name="Futaki S."/>
            <person name="Gariboldi M."/>
            <person name="Georgii-Hemming P."/>
            <person name="Gingeras T.R."/>
            <person name="Gojobori T."/>
            <person name="Green R.E."/>
            <person name="Gustincich S."/>
            <person name="Harbers M."/>
            <person name="Hayashi Y."/>
            <person name="Hensch T.K."/>
            <person name="Hirokawa N."/>
            <person name="Hill D."/>
            <person name="Huminiecki L."/>
            <person name="Iacono M."/>
            <person name="Ikeo K."/>
            <person name="Iwama A."/>
            <person name="Ishikawa T."/>
            <person name="Jakt M."/>
            <person name="Kanapin A."/>
            <person name="Katoh M."/>
            <person name="Kawasawa Y."/>
            <person name="Kelso J."/>
            <person name="Kitamura H."/>
            <person name="Kitano H."/>
            <person name="Kollias G."/>
            <person name="Krishnan S.P."/>
            <person name="Kruger A."/>
            <person name="Kummerfeld S.K."/>
            <person name="Kurochkin I.V."/>
            <person name="Lareau L.F."/>
            <person name="Lazarevic D."/>
            <person name="Lipovich L."/>
            <person name="Liu J."/>
            <person name="Liuni S."/>
            <person name="McWilliam S."/>
            <person name="Madan Babu M."/>
            <person name="Madera M."/>
            <person name="Marchionni L."/>
            <person name="Matsuda H."/>
            <person name="Matsuzawa S."/>
            <person name="Miki H."/>
            <person name="Mignone F."/>
            <person name="Miyake S."/>
            <person name="Morris K."/>
            <person name="Mottagui-Tabar S."/>
            <person name="Mulder N."/>
            <person name="Nakano N."/>
            <person name="Nakauchi H."/>
            <person name="Ng P."/>
            <person name="Nilsson R."/>
            <person name="Nishiguchi S."/>
            <person name="Nishikawa S."/>
            <person name="Nori F."/>
            <person name="Ohara O."/>
            <person name="Okazaki Y."/>
            <person name="Orlando V."/>
            <person name="Pang K.C."/>
            <person name="Pavan W.J."/>
            <person name="Pavesi G."/>
            <person name="Pesole G."/>
            <person name="Petrovsky N."/>
            <person name="Piazza S."/>
            <person name="Reed J."/>
            <person name="Reid J.F."/>
            <person name="Ring B.Z."/>
            <person name="Ringwald M."/>
            <person name="Rost B."/>
            <person name="Ruan Y."/>
            <person name="Salzberg S.L."/>
            <person name="Sandelin A."/>
            <person name="Schneider C."/>
            <person name="Schoenbach C."/>
            <person name="Sekiguchi K."/>
            <person name="Semple C.A."/>
            <person name="Seno S."/>
            <person name="Sessa L."/>
            <person name="Sheng Y."/>
            <person name="Shibata Y."/>
            <person name="Shimada H."/>
            <person name="Shimada K."/>
            <person name="Silva D."/>
            <person name="Sinclair B."/>
            <person name="Sperling S."/>
            <person name="Stupka E."/>
            <person name="Sugiura K."/>
            <person name="Sultana R."/>
            <person name="Takenaka Y."/>
            <person name="Taki K."/>
            <person name="Tammoja K."/>
            <person name="Tan S.L."/>
            <person name="Tang S."/>
            <person name="Taylor M.S."/>
            <person name="Tegner J."/>
            <person name="Teichmann S.A."/>
            <person name="Ueda H.R."/>
            <person name="van Nimwegen E."/>
            <person name="Verardo R."/>
            <person name="Wei C.L."/>
            <person name="Yagi K."/>
            <person name="Yamanishi H."/>
            <person name="Zabarovsky E."/>
            <person name="Zhu S."/>
            <person name="Zimmer A."/>
            <person name="Hide W."/>
            <person name="Bult C."/>
            <person name="Grimmond S.M."/>
            <person name="Teasdale R.D."/>
            <person name="Liu E.T."/>
            <person name="Brusic V."/>
            <person name="Quackenbush J."/>
            <person name="Wahlestedt C."/>
            <person name="Mattick J.S."/>
            <person name="Hume D.A."/>
            <person name="Kai C."/>
            <person name="Sasaki D."/>
            <person name="Tomaru Y."/>
            <person name="Fukuda S."/>
            <person name="Kanamori-Katayama M."/>
            <person name="Suzuki M."/>
            <person name="Aoki J."/>
            <person name="Arakawa T."/>
            <person name="Iida J."/>
            <person name="Imamura K."/>
            <person name="Itoh M."/>
            <person name="Kato T."/>
            <person name="Kawaji H."/>
            <person name="Kawagashira N."/>
            <person name="Kawashima T."/>
            <person name="Kojima M."/>
            <person name="Kondo S."/>
            <person name="Konno H."/>
            <person name="Nakano K."/>
            <person name="Ninomiya N."/>
            <person name="Nishio T."/>
            <person name="Okada M."/>
            <person name="Plessy C."/>
            <person name="Shibata K."/>
            <person name="Shiraki T."/>
            <person name="Suzuki S."/>
            <person name="Tagami M."/>
            <person name="Waki K."/>
            <person name="Watahiki A."/>
            <person name="Okamura-Oho Y."/>
            <person name="Suzuki H."/>
            <person name="Kawai J."/>
            <person name="Hayashizaki Y."/>
        </authorList>
    </citation>
    <scope>NUCLEOTIDE SEQUENCE [LARGE SCALE MRNA]</scope>
    <source>
        <strain>C57BL/6J</strain>
        <tissue>Testis</tissue>
    </source>
</reference>
<reference key="3">
    <citation type="journal article" date="2004" name="Genome Res.">
        <title>The status, quality, and expansion of the NIH full-length cDNA project: the Mammalian Gene Collection (MGC).</title>
        <authorList>
            <consortium name="The MGC Project Team"/>
        </authorList>
    </citation>
    <scope>NUCLEOTIDE SEQUENCE [LARGE SCALE MRNA]</scope>
    <source>
        <tissue>Testis</tissue>
    </source>
</reference>
<reference key="4">
    <citation type="journal article" date="2010" name="Cell">
        <title>A tissue-specific atlas of mouse protein phosphorylation and expression.</title>
        <authorList>
            <person name="Huttlin E.L."/>
            <person name="Jedrychowski M.P."/>
            <person name="Elias J.E."/>
            <person name="Goswami T."/>
            <person name="Rad R."/>
            <person name="Beausoleil S.A."/>
            <person name="Villen J."/>
            <person name="Haas W."/>
            <person name="Sowa M.E."/>
            <person name="Gygi S.P."/>
        </authorList>
    </citation>
    <scope>IDENTIFICATION BY MASS SPECTROMETRY [LARGE SCALE ANALYSIS]</scope>
    <source>
        <tissue>Testis</tissue>
    </source>
</reference>
<gene>
    <name type="primary">Rnf32</name>
    <name type="synonym">Lmbr2</name>
</gene>
<feature type="chain" id="PRO_0000245534" description="RING finger protein 32">
    <location>
        <begin position="1"/>
        <end position="368"/>
    </location>
</feature>
<feature type="domain" description="IQ" evidence="2">
    <location>
        <begin position="188"/>
        <end position="217"/>
    </location>
</feature>
<feature type="zinc finger region" description="RING-type 1; atypical" evidence="3">
    <location>
        <begin position="129"/>
        <end position="171"/>
    </location>
</feature>
<feature type="zinc finger region" description="RING-type 2; atypical" evidence="3">
    <location>
        <begin position="295"/>
        <end position="358"/>
    </location>
</feature>
<feature type="region of interest" description="Disordered" evidence="4">
    <location>
        <begin position="45"/>
        <end position="82"/>
    </location>
</feature>
<feature type="sequence conflict" description="In Ref. 2; BAB24557." evidence="5" ref="2">
    <original>L</original>
    <variation>I</variation>
    <location>
        <position position="84"/>
    </location>
</feature>
<feature type="sequence conflict" description="In Ref. 2; BAB24557." evidence="5" ref="2">
    <original>L</original>
    <variation>I</variation>
    <location>
        <position position="99"/>
    </location>
</feature>
<feature type="sequence conflict" description="In Ref. 2; BAB24242." evidence="5" ref="2">
    <original>E</original>
    <variation>G</variation>
    <location>
        <position position="113"/>
    </location>
</feature>
<feature type="sequence conflict" description="In Ref. 2; BAB24242." evidence="5" ref="2">
    <original>G</original>
    <variation>R</variation>
    <location>
        <position position="123"/>
    </location>
</feature>
<feature type="sequence conflict" description="In Ref. 2; BAB24557." evidence="5" ref="2">
    <original>N</original>
    <variation>K</variation>
    <location>
        <position position="245"/>
    </location>
</feature>
<sequence>MLRNKDRSSNKGNLAVTAVALQDHLLHDLQLGHLSVADPCKIKARKKEKKSKSLKRDATAIIDTGLRKSTEGPNMEDPEKEYVLDPTPPPLTLAQKLGLLPPPPLPLSSDEWERVKQRSLLQGDSIQPCPICKEEFELHPQVLLSCSHVFHRACLQAFEKFTNKKTCPLCRKNQYQTRVIHDGARLFRVKCATRIQAYWRGYIVRKWYRNLRKIIPPSDAKLRRKFFEEKFTEISHRILCSYNTNIDELFSEIDVCLAVNRSILQQLDERCGQIITKEDWEKIQAQAAHHEIYECSICLTPLSFHGDGRQAAIGTSSQRPRETVLLSCAHLFHNACLLALEEFSLGDNAPFHVCPLCRSCYQKKIVEC</sequence>
<comment type="function">
    <text>May play a role in sperm formation.</text>
</comment>
<comment type="subcellular location">
    <subcellularLocation>
        <location evidence="1">Cytoplasm</location>
    </subcellularLocation>
</comment>
<comment type="miscellaneous">
    <text>No coding region alterations in either Hemimelic extra-toes (Hx) or Hammertoe (Hm) mutant mice was detected.</text>
</comment>
<protein>
    <recommendedName>
        <fullName>RING finger protein 32</fullName>
    </recommendedName>
    <alternativeName>
        <fullName>Limb region protein 2</fullName>
    </alternativeName>
</protein>
<dbReference type="EMBL" id="AF190664">
    <property type="protein sequence ID" value="AAF91091.1"/>
    <property type="molecule type" value="mRNA"/>
</dbReference>
<dbReference type="EMBL" id="AK005795">
    <property type="protein sequence ID" value="BAB24242.1"/>
    <property type="molecule type" value="mRNA"/>
</dbReference>
<dbReference type="EMBL" id="AK006379">
    <property type="protein sequence ID" value="BAB24557.1"/>
    <property type="molecule type" value="mRNA"/>
</dbReference>
<dbReference type="EMBL" id="BC089493">
    <property type="protein sequence ID" value="AAH89493.1"/>
    <property type="molecule type" value="mRNA"/>
</dbReference>
<dbReference type="CCDS" id="CCDS39041.1"/>
<dbReference type="RefSeq" id="NP_001276686.1">
    <property type="nucleotide sequence ID" value="NM_001289757.1"/>
</dbReference>
<dbReference type="RefSeq" id="NP_067445.3">
    <property type="nucleotide sequence ID" value="NM_021470.6"/>
</dbReference>
<dbReference type="RefSeq" id="XP_006535838.1">
    <property type="nucleotide sequence ID" value="XM_006535775.4"/>
</dbReference>
<dbReference type="RefSeq" id="XP_006535839.1">
    <property type="nucleotide sequence ID" value="XM_006535776.5"/>
</dbReference>
<dbReference type="RefSeq" id="XP_006535840.1">
    <property type="nucleotide sequence ID" value="XM_006535777.3"/>
</dbReference>
<dbReference type="RefSeq" id="XP_006535841.1">
    <property type="nucleotide sequence ID" value="XM_006535778.3"/>
</dbReference>
<dbReference type="RefSeq" id="XP_006535842.1">
    <property type="nucleotide sequence ID" value="XM_006535779.3"/>
</dbReference>
<dbReference type="RefSeq" id="XP_006535843.1">
    <property type="nucleotide sequence ID" value="XM_006535780.3"/>
</dbReference>
<dbReference type="RefSeq" id="XP_006535844.1">
    <property type="nucleotide sequence ID" value="XM_006535781.4"/>
</dbReference>
<dbReference type="SMR" id="Q9JIT1"/>
<dbReference type="FunCoup" id="Q9JIT1">
    <property type="interactions" value="705"/>
</dbReference>
<dbReference type="STRING" id="10090.ENSMUSP00000001247"/>
<dbReference type="GlyGen" id="Q9JIT1">
    <property type="glycosylation" value="1 site"/>
</dbReference>
<dbReference type="iPTMnet" id="Q9JIT1"/>
<dbReference type="PhosphoSitePlus" id="Q9JIT1"/>
<dbReference type="SwissPalm" id="Q9JIT1"/>
<dbReference type="PaxDb" id="10090-ENSMUSP00000001247"/>
<dbReference type="ProteomicsDB" id="260988"/>
<dbReference type="Antibodypedia" id="18881">
    <property type="antibodies" value="79 antibodies from 20 providers"/>
</dbReference>
<dbReference type="DNASU" id="56874"/>
<dbReference type="Ensembl" id="ENSMUST00000001247.12">
    <property type="protein sequence ID" value="ENSMUSP00000001247.6"/>
    <property type="gene ID" value="ENSMUSG00000029130.13"/>
</dbReference>
<dbReference type="Ensembl" id="ENSMUST00000160246.8">
    <property type="protein sequence ID" value="ENSMUSP00000124657.2"/>
    <property type="gene ID" value="ENSMUSG00000029130.13"/>
</dbReference>
<dbReference type="Ensembl" id="ENSMUST00000168460.8">
    <property type="protein sequence ID" value="ENSMUSP00000132213.2"/>
    <property type="gene ID" value="ENSMUSG00000029130.13"/>
</dbReference>
<dbReference type="GeneID" id="56874"/>
<dbReference type="KEGG" id="mmu:56874"/>
<dbReference type="UCSC" id="uc008wuc.2">
    <property type="organism name" value="mouse"/>
</dbReference>
<dbReference type="AGR" id="MGI:1861747"/>
<dbReference type="CTD" id="140545"/>
<dbReference type="MGI" id="MGI:1861747">
    <property type="gene designation" value="Rnf32"/>
</dbReference>
<dbReference type="VEuPathDB" id="HostDB:ENSMUSG00000029130"/>
<dbReference type="eggNOG" id="KOG0800">
    <property type="taxonomic scope" value="Eukaryota"/>
</dbReference>
<dbReference type="GeneTree" id="ENSGT00390000003759"/>
<dbReference type="InParanoid" id="Q9JIT1"/>
<dbReference type="OMA" id="PQENDWD"/>
<dbReference type="OrthoDB" id="8062037at2759"/>
<dbReference type="PhylomeDB" id="Q9JIT1"/>
<dbReference type="TreeFam" id="TF329796"/>
<dbReference type="BioGRID-ORCS" id="56874">
    <property type="hits" value="2 hits in 78 CRISPR screens"/>
</dbReference>
<dbReference type="ChiTaRS" id="Rnf32">
    <property type="organism name" value="mouse"/>
</dbReference>
<dbReference type="PRO" id="PR:Q9JIT1"/>
<dbReference type="Proteomes" id="UP000000589">
    <property type="component" value="Chromosome 5"/>
</dbReference>
<dbReference type="RNAct" id="Q9JIT1">
    <property type="molecule type" value="protein"/>
</dbReference>
<dbReference type="Bgee" id="ENSMUSG00000029130">
    <property type="expression patterns" value="Expressed in spermatocyte and 184 other cell types or tissues"/>
</dbReference>
<dbReference type="ExpressionAtlas" id="Q9JIT1">
    <property type="expression patterns" value="baseline and differential"/>
</dbReference>
<dbReference type="GO" id="GO:0016235">
    <property type="term" value="C:aggresome"/>
    <property type="evidence" value="ECO:0000266"/>
    <property type="project" value="MGI"/>
</dbReference>
<dbReference type="GO" id="GO:0005829">
    <property type="term" value="C:cytosol"/>
    <property type="evidence" value="ECO:0007669"/>
    <property type="project" value="Ensembl"/>
</dbReference>
<dbReference type="GO" id="GO:0005768">
    <property type="term" value="C:endosome"/>
    <property type="evidence" value="ECO:0007669"/>
    <property type="project" value="Ensembl"/>
</dbReference>
<dbReference type="GO" id="GO:0016604">
    <property type="term" value="C:nuclear body"/>
    <property type="evidence" value="ECO:0007669"/>
    <property type="project" value="Ensembl"/>
</dbReference>
<dbReference type="GO" id="GO:0008270">
    <property type="term" value="F:zinc ion binding"/>
    <property type="evidence" value="ECO:0007669"/>
    <property type="project" value="UniProtKB-KW"/>
</dbReference>
<dbReference type="CDD" id="cd23767">
    <property type="entry name" value="IQCD"/>
    <property type="match status" value="1"/>
</dbReference>
<dbReference type="CDD" id="cd16677">
    <property type="entry name" value="RING-H2_RNF32_rpt1"/>
    <property type="match status" value="1"/>
</dbReference>
<dbReference type="CDD" id="cd16678">
    <property type="entry name" value="RING-H2_RNF32_rpt2"/>
    <property type="match status" value="1"/>
</dbReference>
<dbReference type="FunFam" id="3.30.40.10:FF:001048">
    <property type="entry name" value="Ring finger protein 32"/>
    <property type="match status" value="1"/>
</dbReference>
<dbReference type="FunFam" id="3.30.40.10:FF:000208">
    <property type="entry name" value="Zinc finger protein-related isoform 1"/>
    <property type="match status" value="1"/>
</dbReference>
<dbReference type="Gene3D" id="1.20.5.190">
    <property type="match status" value="1"/>
</dbReference>
<dbReference type="Gene3D" id="3.30.40.10">
    <property type="entry name" value="Zinc/RING finger domain, C3HC4 (zinc finger)"/>
    <property type="match status" value="2"/>
</dbReference>
<dbReference type="InterPro" id="IPR000048">
    <property type="entry name" value="IQ_motif_EF-hand-BS"/>
</dbReference>
<dbReference type="InterPro" id="IPR042862">
    <property type="entry name" value="RNF32"/>
</dbReference>
<dbReference type="InterPro" id="IPR027370">
    <property type="entry name" value="Znf-RING_euk"/>
</dbReference>
<dbReference type="InterPro" id="IPR001841">
    <property type="entry name" value="Znf_RING"/>
</dbReference>
<dbReference type="InterPro" id="IPR013083">
    <property type="entry name" value="Znf_RING/FYVE/PHD"/>
</dbReference>
<dbReference type="PANTHER" id="PTHR14991">
    <property type="entry name" value="RING FINGER PROTEIN 32"/>
    <property type="match status" value="1"/>
</dbReference>
<dbReference type="PANTHER" id="PTHR14991:SF0">
    <property type="entry name" value="RING FINGER PROTEIN 32"/>
    <property type="match status" value="1"/>
</dbReference>
<dbReference type="Pfam" id="PF00612">
    <property type="entry name" value="IQ"/>
    <property type="match status" value="1"/>
</dbReference>
<dbReference type="Pfam" id="PF13445">
    <property type="entry name" value="zf-RING_UBOX"/>
    <property type="match status" value="2"/>
</dbReference>
<dbReference type="SMART" id="SM00184">
    <property type="entry name" value="RING"/>
    <property type="match status" value="2"/>
</dbReference>
<dbReference type="SUPFAM" id="SSF57850">
    <property type="entry name" value="RING/U-box"/>
    <property type="match status" value="2"/>
</dbReference>
<dbReference type="PROSITE" id="PS50096">
    <property type="entry name" value="IQ"/>
    <property type="match status" value="1"/>
</dbReference>
<dbReference type="PROSITE" id="PS50089">
    <property type="entry name" value="ZF_RING_2"/>
    <property type="match status" value="2"/>
</dbReference>
<organism>
    <name type="scientific">Mus musculus</name>
    <name type="common">Mouse</name>
    <dbReference type="NCBI Taxonomy" id="10090"/>
    <lineage>
        <taxon>Eukaryota</taxon>
        <taxon>Metazoa</taxon>
        <taxon>Chordata</taxon>
        <taxon>Craniata</taxon>
        <taxon>Vertebrata</taxon>
        <taxon>Euteleostomi</taxon>
        <taxon>Mammalia</taxon>
        <taxon>Eutheria</taxon>
        <taxon>Euarchontoglires</taxon>
        <taxon>Glires</taxon>
        <taxon>Rodentia</taxon>
        <taxon>Myomorpha</taxon>
        <taxon>Muroidea</taxon>
        <taxon>Muridae</taxon>
        <taxon>Murinae</taxon>
        <taxon>Mus</taxon>
        <taxon>Mus</taxon>
    </lineage>
</organism>
<accession>Q9JIT1</accession>
<accession>Q9D9X0</accession>
<accession>Q9DAJ3</accession>
<keyword id="KW-0963">Cytoplasm</keyword>
<keyword id="KW-0479">Metal-binding</keyword>
<keyword id="KW-1185">Reference proteome</keyword>
<keyword id="KW-0677">Repeat</keyword>
<keyword id="KW-0862">Zinc</keyword>
<keyword id="KW-0863">Zinc-finger</keyword>
<evidence type="ECO:0000250" key="1"/>
<evidence type="ECO:0000255" key="2">
    <source>
        <dbReference type="PROSITE-ProRule" id="PRU00116"/>
    </source>
</evidence>
<evidence type="ECO:0000255" key="3">
    <source>
        <dbReference type="PROSITE-ProRule" id="PRU00175"/>
    </source>
</evidence>
<evidence type="ECO:0000256" key="4">
    <source>
        <dbReference type="SAM" id="MobiDB-lite"/>
    </source>
</evidence>
<evidence type="ECO:0000305" key="5"/>